<evidence type="ECO:0000250" key="1"/>
<evidence type="ECO:0000255" key="2"/>
<evidence type="ECO:0000256" key="3">
    <source>
        <dbReference type="SAM" id="MobiDB-lite"/>
    </source>
</evidence>
<comment type="function">
    <text evidence="1">The surface protein (SU) attaches the virus to the host cell by binding to its receptor. This interaction triggers the refolding of the transmembrane protein (TM) and is thought to activate its fusogenic potential by unmasking its fusion peptide. Fusion occurs at the host cell plasma membrane (By similarity).</text>
</comment>
<comment type="function">
    <text evidence="1">The transmembrane protein (TM) acts as a class I viral fusion protein. Under the current model, the protein has at least 3 conformational states: pre-fusion native state, pre-hairpin intermediate state, and post-fusion hairpin state. During viral and target cell membrane fusion, the coiled coil regions (heptad repeats) assume a trimer-of-hairpins structure, positioning the fusion peptide in close proximity to the C-terminal region of the ectodomain. The formation of this structure appears to drive apposition and subsequent fusion of viral and target cell membranes. Membranes fusion leads to delivery of the nucleocapsid into the cytoplasm (By similarity).</text>
</comment>
<comment type="subunit">
    <text evidence="1">The mature envelope protein (Env) consists of a trimer of SU-TM heterodimers attached by a labile interchain disulfide bond.</text>
</comment>
<comment type="subcellular location">
    <molecule>Transmembrane protein</molecule>
    <subcellularLocation>
        <location evidence="1">Virion membrane</location>
        <topology evidence="1">Single-pass type I membrane protein</topology>
    </subcellularLocation>
    <subcellularLocation>
        <location evidence="1">Host cell membrane</location>
        <topology evidence="1">Single-pass type I membrane protein</topology>
    </subcellularLocation>
</comment>
<comment type="subcellular location">
    <molecule>Surface protein</molecule>
    <subcellularLocation>
        <location>Virion membrane</location>
        <topology>Peripheral membrane protein</topology>
    </subcellularLocation>
    <subcellularLocation>
        <location evidence="1">Host cell membrane</location>
        <topology evidence="1">Peripheral membrane protein</topology>
    </subcellularLocation>
    <text evidence="1">The surface protein is not anchored to the viral envelope, but associates with the extravirion surface through its binding to TM. Both proteins are thought to be concentrated at the site of budding and incorporated into the virions possibly by contacts between the cytoplasmic tail of Env and the N-terminus of Gag (By similarity).</text>
</comment>
<comment type="PTM">
    <text evidence="1">Specific enzymatic cleavages in vivo yield mature proteins. Envelope glycoproteins are synthesized as an inactive precursor that is N-glycosylated and processed likely by host cell furin or by a furin-like protease in the Golgi to yield the mature SU and TM proteins. The cleavage site between SU and TM requires the minimal sequence [KR]-X-[KR]-R (By similarity).</text>
</comment>
<name>ENV_FLVCA</name>
<organism>
    <name type="scientific">Feline leukemia virus (strain C/FA27)</name>
    <dbReference type="NCBI Taxonomy" id="103917"/>
    <lineage>
        <taxon>Viruses</taxon>
        <taxon>Riboviria</taxon>
        <taxon>Pararnavirae</taxon>
        <taxon>Artverviricota</taxon>
        <taxon>Revtraviricetes</taxon>
        <taxon>Ortervirales</taxon>
        <taxon>Retroviridae</taxon>
        <taxon>Orthoretrovirinae</taxon>
        <taxon>Gammaretrovirus</taxon>
        <taxon>Feline leukemia virus</taxon>
    </lineage>
</organism>
<proteinExistence type="inferred from homology"/>
<keyword id="KW-0165">Cleavage on pair of basic residues</keyword>
<keyword id="KW-1015">Disulfide bond</keyword>
<keyword id="KW-1169">Fusion of virus membrane with host cell membrane</keyword>
<keyword id="KW-1168">Fusion of virus membrane with host membrane</keyword>
<keyword id="KW-0325">Glycoprotein</keyword>
<keyword id="KW-1032">Host cell membrane</keyword>
<keyword id="KW-1043">Host membrane</keyword>
<keyword id="KW-0945">Host-virus interaction</keyword>
<keyword id="KW-0472">Membrane</keyword>
<keyword id="KW-1161">Viral attachment to host cell</keyword>
<keyword id="KW-0261">Viral envelope protein</keyword>
<keyword id="KW-1162">Viral penetration into host cytoplasm</keyword>
<keyword id="KW-0946">Virion</keyword>
<keyword id="KW-1160">Virus entry into host cell</keyword>
<dbReference type="EMBL" id="M89998">
    <property type="protein sequence ID" value="AAA43057.1"/>
    <property type="molecule type" value="Genomic_DNA"/>
</dbReference>
<dbReference type="SMR" id="Q02076"/>
<dbReference type="GlyCosmos" id="Q02076">
    <property type="glycosylation" value="9 sites, No reported glycans"/>
</dbReference>
<dbReference type="GO" id="GO:0020002">
    <property type="term" value="C:host cell plasma membrane"/>
    <property type="evidence" value="ECO:0007669"/>
    <property type="project" value="UniProtKB-SubCell"/>
</dbReference>
<dbReference type="GO" id="GO:0016020">
    <property type="term" value="C:membrane"/>
    <property type="evidence" value="ECO:0007669"/>
    <property type="project" value="UniProtKB-KW"/>
</dbReference>
<dbReference type="GO" id="GO:0019031">
    <property type="term" value="C:viral envelope"/>
    <property type="evidence" value="ECO:0007669"/>
    <property type="project" value="UniProtKB-KW"/>
</dbReference>
<dbReference type="GO" id="GO:0055036">
    <property type="term" value="C:virion membrane"/>
    <property type="evidence" value="ECO:0007669"/>
    <property type="project" value="UniProtKB-SubCell"/>
</dbReference>
<dbReference type="GO" id="GO:0019064">
    <property type="term" value="P:fusion of virus membrane with host plasma membrane"/>
    <property type="evidence" value="ECO:0007669"/>
    <property type="project" value="UniProtKB-KW"/>
</dbReference>
<dbReference type="GO" id="GO:0046718">
    <property type="term" value="P:symbiont entry into host cell"/>
    <property type="evidence" value="ECO:0007669"/>
    <property type="project" value="UniProtKB-KW"/>
</dbReference>
<dbReference type="GO" id="GO:0019062">
    <property type="term" value="P:virion attachment to host cell"/>
    <property type="evidence" value="ECO:0007669"/>
    <property type="project" value="UniProtKB-KW"/>
</dbReference>
<dbReference type="Gene3D" id="3.90.310.10">
    <property type="entry name" value="ENV polyprotein, receptor-binding domain"/>
    <property type="match status" value="1"/>
</dbReference>
<dbReference type="InterPro" id="IPR008981">
    <property type="entry name" value="FMuLV_rcpt-bd"/>
</dbReference>
<dbReference type="InterPro" id="IPR018154">
    <property type="entry name" value="TLV/ENV_coat_polyprotein"/>
</dbReference>
<dbReference type="PANTHER" id="PTHR10424:SF72">
    <property type="entry name" value="BC035947 PROTEIN-RELATED"/>
    <property type="match status" value="1"/>
</dbReference>
<dbReference type="PANTHER" id="PTHR10424">
    <property type="entry name" value="VIRAL ENVELOPE PROTEIN"/>
    <property type="match status" value="1"/>
</dbReference>
<dbReference type="Pfam" id="PF00429">
    <property type="entry name" value="TLV_coat"/>
    <property type="match status" value="1"/>
</dbReference>
<dbReference type="SUPFAM" id="SSF49830">
    <property type="entry name" value="ENV polyprotein, receptor-binding domain"/>
    <property type="match status" value="1"/>
</dbReference>
<sequence>PHQIYNVTWVITNVQTNTQANATSMLGTLTDAYPTLHVDLCDLVGNTWEPIVPDLRGWASYSSSKYGCKTADRKKQQQTYPFYVCPGHAPSLGPKGTHCGGAQDGFCAAWGCETTGEAWWKPTSSWDYITVKRGSSQDNSCEGKCNPLVLQFTQKGRQASWDGPKMWGLRLYRTGYDPIALFTVSRQVSTITPPQAMGPNLVLPDRKPPSRQSQTGSKVATQRPQTNESAPRSIAPTTMGPKRIGTGDRLINLVQGTYLALNATDPNKTKDCWLCLVSRPPYYEGIAILGNYSNQTNPPPSCLSIPQHKLTISEVSGQGLCIGTVPKTHQALCNETQQGHTGAHYLAAPNGTYWACNTGLTPCISMAVLNWTSDFCVLIELWPRVTYHQPEYVYTHFAKAVRFRREPISL</sequence>
<reference key="1">
    <citation type="journal article" date="1992" name="Proc. Natl. Acad. Sci. U.S.A.">
        <title>Feline leukemia virus subgroup C phenotype evolves through distinct alterations near the N-terminus of the envelope surface glycoprotein.</title>
        <authorList>
            <person name="Brojatsch J."/>
            <person name="Kristal B.S."/>
            <person name="Viglianti G.A."/>
            <person name="Khiroya R."/>
            <person name="Hoover E.A."/>
            <person name="Mullins J.I."/>
        </authorList>
    </citation>
    <scope>NUCLEOTIDE SEQUENCE [GENOMIC DNA]</scope>
</reference>
<protein>
    <recommendedName>
        <fullName>Envelope glycoprotein</fullName>
    </recommendedName>
    <alternativeName>
        <fullName>Env polyprotein</fullName>
    </alternativeName>
    <component>
        <recommendedName>
            <fullName>Surface protein</fullName>
            <shortName>SU</shortName>
        </recommendedName>
        <alternativeName>
            <fullName>Glycoprotein 70</fullName>
            <shortName>gp70</shortName>
        </alternativeName>
    </component>
    <component>
        <recommendedName>
            <fullName>Transmembrane protein</fullName>
            <shortName>TM</shortName>
        </recommendedName>
        <alternativeName>
            <fullName>Envelope protein p15E</fullName>
        </alternativeName>
    </component>
</protein>
<accession>Q02076</accession>
<feature type="chain" id="PRO_0000239563" description="Envelope glycoprotein">
    <location>
        <begin position="1" status="less than"/>
        <end position="410" status="greater than"/>
    </location>
</feature>
<feature type="chain" id="PRO_0000040708" description="Surface protein" evidence="1">
    <location>
        <begin position="1" status="less than"/>
        <end position="405"/>
    </location>
</feature>
<feature type="chain" id="PRO_0000040709" description="Transmembrane protein" evidence="1">
    <location>
        <begin position="406"/>
        <end position="410" status="greater than"/>
    </location>
</feature>
<feature type="topological domain" description="Extracellular" evidence="2">
    <location>
        <begin position="1" status="less than"/>
        <end position="410" status="greater than"/>
    </location>
</feature>
<feature type="region of interest" description="Disordered" evidence="3">
    <location>
        <begin position="193"/>
        <end position="242"/>
    </location>
</feature>
<feature type="short sequence motif" description="CXXC">
    <location>
        <begin position="272"/>
        <end position="275"/>
    </location>
</feature>
<feature type="compositionally biased region" description="Polar residues" evidence="3">
    <location>
        <begin position="210"/>
        <end position="230"/>
    </location>
</feature>
<feature type="site" description="Cleavage; by host" evidence="1">
    <location>
        <begin position="405"/>
        <end position="406"/>
    </location>
</feature>
<feature type="glycosylation site" description="N-linked (GlcNAc...) asparagine; by host" evidence="2">
    <location>
        <position position="6"/>
    </location>
</feature>
<feature type="glycosylation site" description="N-linked (GlcNAc...) asparagine; by host" evidence="2">
    <location>
        <position position="21"/>
    </location>
</feature>
<feature type="glycosylation site" description="N-linked (GlcNAc...) asparagine; by host" evidence="2">
    <location>
        <position position="227"/>
    </location>
</feature>
<feature type="glycosylation site" description="N-linked (GlcNAc...) asparagine; by host" evidence="2">
    <location>
        <position position="262"/>
    </location>
</feature>
<feature type="glycosylation site" description="N-linked (GlcNAc...) asparagine; by host" evidence="2">
    <location>
        <position position="267"/>
    </location>
</feature>
<feature type="glycosylation site" description="N-linked (GlcNAc...) asparagine; by host" evidence="2">
    <location>
        <position position="294"/>
    </location>
</feature>
<feature type="glycosylation site" description="N-linked (GlcNAc...) asparagine; by host" evidence="2">
    <location>
        <position position="334"/>
    </location>
</feature>
<feature type="glycosylation site" description="N-linked (GlcNAc...) asparagine; by host" evidence="2">
    <location>
        <position position="350"/>
    </location>
</feature>
<feature type="glycosylation site" description="N-linked (GlcNAc...) asparagine; by host" evidence="2">
    <location>
        <position position="370"/>
    </location>
</feature>
<feature type="disulfide bond" evidence="1">
    <location>
        <begin position="85"/>
        <end position="107"/>
    </location>
</feature>
<feature type="disulfide bond" evidence="1">
    <location>
        <begin position="99"/>
        <end position="112"/>
    </location>
</feature>
<feature type="non-terminal residue">
    <location>
        <position position="1"/>
    </location>
</feature>
<feature type="non-terminal residue">
    <location>
        <position position="410"/>
    </location>
</feature>
<organismHost>
    <name type="scientific">Felis catus</name>
    <name type="common">Cat</name>
    <name type="synonym">Felis silvestris catus</name>
    <dbReference type="NCBI Taxonomy" id="9685"/>
</organismHost>
<gene>
    <name type="primary">env</name>
</gene>